<gene>
    <name type="primary">Cct3</name>
</gene>
<dbReference type="EC" id="3.6.1.-" evidence="2"/>
<dbReference type="EMBL" id="BC063178">
    <property type="protein sequence ID" value="AAH63178.1"/>
    <property type="molecule type" value="mRNA"/>
</dbReference>
<dbReference type="RefSeq" id="NP_954522.1">
    <property type="nucleotide sequence ID" value="NM_199091.3"/>
</dbReference>
<dbReference type="SMR" id="Q6P502"/>
<dbReference type="BioGRID" id="254921">
    <property type="interactions" value="9"/>
</dbReference>
<dbReference type="FunCoup" id="Q6P502">
    <property type="interactions" value="3886"/>
</dbReference>
<dbReference type="IntAct" id="Q6P502">
    <property type="interactions" value="5"/>
</dbReference>
<dbReference type="MINT" id="Q6P502"/>
<dbReference type="STRING" id="10116.ENSRNOP00000025824"/>
<dbReference type="iPTMnet" id="Q6P502"/>
<dbReference type="PhosphoSitePlus" id="Q6P502"/>
<dbReference type="jPOST" id="Q6P502"/>
<dbReference type="PaxDb" id="10116-ENSRNOP00000025824"/>
<dbReference type="Ensembl" id="ENSRNOT00000025824.7">
    <property type="protein sequence ID" value="ENSRNOP00000025824.4"/>
    <property type="gene ID" value="ENSRNOG00000019090.7"/>
</dbReference>
<dbReference type="GeneID" id="295230"/>
<dbReference type="KEGG" id="rno:295230"/>
<dbReference type="UCSC" id="RGD:735038">
    <property type="organism name" value="rat"/>
</dbReference>
<dbReference type="AGR" id="RGD:735038"/>
<dbReference type="CTD" id="7203"/>
<dbReference type="RGD" id="735038">
    <property type="gene designation" value="Cct3"/>
</dbReference>
<dbReference type="eggNOG" id="KOG0364">
    <property type="taxonomic scope" value="Eukaryota"/>
</dbReference>
<dbReference type="GeneTree" id="ENSGT00570000079224"/>
<dbReference type="HOGENOM" id="CLU_008891_7_3_1"/>
<dbReference type="InParanoid" id="Q6P502"/>
<dbReference type="OMA" id="CGGSTIR"/>
<dbReference type="OrthoDB" id="275057at2759"/>
<dbReference type="PhylomeDB" id="Q6P502"/>
<dbReference type="TreeFam" id="TF105649"/>
<dbReference type="BRENDA" id="3.6.4.B10">
    <property type="organism ID" value="5301"/>
</dbReference>
<dbReference type="Reactome" id="R-RNO-390471">
    <property type="pathway name" value="Association of TriC/CCT with target proteins during biosynthesis"/>
</dbReference>
<dbReference type="Reactome" id="R-RNO-6814122">
    <property type="pathway name" value="Cooperation of PDCL (PhLP1) and TRiC/CCT in G-protein beta folding"/>
</dbReference>
<dbReference type="PRO" id="PR:Q6P502"/>
<dbReference type="Proteomes" id="UP000002494">
    <property type="component" value="Chromosome 2"/>
</dbReference>
<dbReference type="Bgee" id="ENSRNOG00000019090">
    <property type="expression patterns" value="Expressed in testis and 20 other cell types or tissues"/>
</dbReference>
<dbReference type="GO" id="GO:0044297">
    <property type="term" value="C:cell body"/>
    <property type="evidence" value="ECO:0000266"/>
    <property type="project" value="RGD"/>
</dbReference>
<dbReference type="GO" id="GO:0005832">
    <property type="term" value="C:chaperonin-containing T-complex"/>
    <property type="evidence" value="ECO:0000250"/>
    <property type="project" value="UniProtKB"/>
</dbReference>
<dbReference type="GO" id="GO:0005874">
    <property type="term" value="C:microtubule"/>
    <property type="evidence" value="ECO:0000266"/>
    <property type="project" value="RGD"/>
</dbReference>
<dbReference type="GO" id="GO:0002199">
    <property type="term" value="C:zona pellucida receptor complex"/>
    <property type="evidence" value="ECO:0000266"/>
    <property type="project" value="RGD"/>
</dbReference>
<dbReference type="GO" id="GO:0005524">
    <property type="term" value="F:ATP binding"/>
    <property type="evidence" value="ECO:0007669"/>
    <property type="project" value="UniProtKB-KW"/>
</dbReference>
<dbReference type="GO" id="GO:0016887">
    <property type="term" value="F:ATP hydrolysis activity"/>
    <property type="evidence" value="ECO:0007669"/>
    <property type="project" value="InterPro"/>
</dbReference>
<dbReference type="GO" id="GO:0140662">
    <property type="term" value="F:ATP-dependent protein folding chaperone"/>
    <property type="evidence" value="ECO:0007669"/>
    <property type="project" value="InterPro"/>
</dbReference>
<dbReference type="GO" id="GO:0044183">
    <property type="term" value="F:protein folding chaperone"/>
    <property type="evidence" value="ECO:0000266"/>
    <property type="project" value="RGD"/>
</dbReference>
<dbReference type="GO" id="GO:0051082">
    <property type="term" value="F:unfolded protein binding"/>
    <property type="evidence" value="ECO:0000318"/>
    <property type="project" value="GO_Central"/>
</dbReference>
<dbReference type="GO" id="GO:0007339">
    <property type="term" value="P:binding of sperm to zona pellucida"/>
    <property type="evidence" value="ECO:0000266"/>
    <property type="project" value="RGD"/>
</dbReference>
<dbReference type="GO" id="GO:0051086">
    <property type="term" value="P:chaperone mediated protein folding independent of cofactor"/>
    <property type="evidence" value="ECO:0000266"/>
    <property type="project" value="RGD"/>
</dbReference>
<dbReference type="GO" id="GO:0061077">
    <property type="term" value="P:chaperone-mediated protein folding"/>
    <property type="evidence" value="ECO:0000266"/>
    <property type="project" value="RGD"/>
</dbReference>
<dbReference type="GO" id="GO:0032212">
    <property type="term" value="P:positive regulation of telomere maintenance via telomerase"/>
    <property type="evidence" value="ECO:0000266"/>
    <property type="project" value="RGD"/>
</dbReference>
<dbReference type="GO" id="GO:0006457">
    <property type="term" value="P:protein folding"/>
    <property type="evidence" value="ECO:0000266"/>
    <property type="project" value="RGD"/>
</dbReference>
<dbReference type="GO" id="GO:0050821">
    <property type="term" value="P:protein stabilization"/>
    <property type="evidence" value="ECO:0000266"/>
    <property type="project" value="RGD"/>
</dbReference>
<dbReference type="CDD" id="cd03337">
    <property type="entry name" value="TCP1_gamma"/>
    <property type="match status" value="1"/>
</dbReference>
<dbReference type="FunFam" id="1.10.560.10:FF:000069">
    <property type="entry name" value="T-complex protein 1 subunit gamma"/>
    <property type="match status" value="1"/>
</dbReference>
<dbReference type="FunFam" id="1.10.560.10:FF:000076">
    <property type="entry name" value="T-complex protein 1 subunit gamma"/>
    <property type="match status" value="1"/>
</dbReference>
<dbReference type="FunFam" id="3.50.7.10:FF:000005">
    <property type="entry name" value="T-complex protein 1 subunit gamma"/>
    <property type="match status" value="1"/>
</dbReference>
<dbReference type="Gene3D" id="3.50.7.10">
    <property type="entry name" value="GroEL"/>
    <property type="match status" value="1"/>
</dbReference>
<dbReference type="Gene3D" id="1.10.560.10">
    <property type="entry name" value="GroEL-like equatorial domain"/>
    <property type="match status" value="1"/>
</dbReference>
<dbReference type="Gene3D" id="3.30.260.10">
    <property type="entry name" value="TCP-1-like chaperonin intermediate domain"/>
    <property type="match status" value="1"/>
</dbReference>
<dbReference type="InterPro" id="IPR012719">
    <property type="entry name" value="Chap_CCT_gamma"/>
</dbReference>
<dbReference type="InterPro" id="IPR017998">
    <property type="entry name" value="Chaperone_TCP-1"/>
</dbReference>
<dbReference type="InterPro" id="IPR002194">
    <property type="entry name" value="Chaperonin_TCP-1_CS"/>
</dbReference>
<dbReference type="InterPro" id="IPR002423">
    <property type="entry name" value="Cpn60/GroEL/TCP-1"/>
</dbReference>
<dbReference type="InterPro" id="IPR027409">
    <property type="entry name" value="GroEL-like_apical_dom_sf"/>
</dbReference>
<dbReference type="InterPro" id="IPR027413">
    <property type="entry name" value="GROEL-like_equatorial_sf"/>
</dbReference>
<dbReference type="InterPro" id="IPR027410">
    <property type="entry name" value="TCP-1-like_intermed_sf"/>
</dbReference>
<dbReference type="InterPro" id="IPR053374">
    <property type="entry name" value="TCP-1_chaperonin"/>
</dbReference>
<dbReference type="InterPro" id="IPR054827">
    <property type="entry name" value="thermosome_alpha"/>
</dbReference>
<dbReference type="NCBIfam" id="TIGR02344">
    <property type="entry name" value="chap_CCT_gamma"/>
    <property type="match status" value="1"/>
</dbReference>
<dbReference type="NCBIfam" id="NF041082">
    <property type="entry name" value="thermosome_alpha"/>
    <property type="match status" value="1"/>
</dbReference>
<dbReference type="NCBIfam" id="NF041083">
    <property type="entry name" value="thermosome_beta"/>
    <property type="match status" value="1"/>
</dbReference>
<dbReference type="PANTHER" id="PTHR11353">
    <property type="entry name" value="CHAPERONIN"/>
    <property type="match status" value="1"/>
</dbReference>
<dbReference type="Pfam" id="PF00118">
    <property type="entry name" value="Cpn60_TCP1"/>
    <property type="match status" value="1"/>
</dbReference>
<dbReference type="PRINTS" id="PR00304">
    <property type="entry name" value="TCOMPLEXTCP1"/>
</dbReference>
<dbReference type="SUPFAM" id="SSF52029">
    <property type="entry name" value="GroEL apical domain-like"/>
    <property type="match status" value="1"/>
</dbReference>
<dbReference type="SUPFAM" id="SSF48592">
    <property type="entry name" value="GroEL equatorial domain-like"/>
    <property type="match status" value="1"/>
</dbReference>
<dbReference type="SUPFAM" id="SSF54849">
    <property type="entry name" value="GroEL-intermediate domain like"/>
    <property type="match status" value="1"/>
</dbReference>
<dbReference type="PROSITE" id="PS00750">
    <property type="entry name" value="TCP1_1"/>
    <property type="match status" value="1"/>
</dbReference>
<dbReference type="PROSITE" id="PS00751">
    <property type="entry name" value="TCP1_2"/>
    <property type="match status" value="1"/>
</dbReference>
<dbReference type="PROSITE" id="PS00995">
    <property type="entry name" value="TCP1_3"/>
    <property type="match status" value="1"/>
</dbReference>
<evidence type="ECO:0000250" key="1"/>
<evidence type="ECO:0000250" key="2">
    <source>
        <dbReference type="UniProtKB" id="P49368"/>
    </source>
</evidence>
<evidence type="ECO:0000250" key="3">
    <source>
        <dbReference type="UniProtKB" id="P80318"/>
    </source>
</evidence>
<evidence type="ECO:0000256" key="4">
    <source>
        <dbReference type="SAM" id="MobiDB-lite"/>
    </source>
</evidence>
<evidence type="ECO:0000305" key="5"/>
<evidence type="ECO:0007744" key="6">
    <source>
    </source>
</evidence>
<reference key="1">
    <citation type="journal article" date="2004" name="Genome Res.">
        <title>The status, quality, and expansion of the NIH full-length cDNA project: the Mammalian Gene Collection (MGC).</title>
        <authorList>
            <consortium name="The MGC Project Team"/>
        </authorList>
    </citation>
    <scope>NUCLEOTIDE SEQUENCE [LARGE SCALE MRNA]</scope>
    <source>
        <tissue>Pituitary</tissue>
    </source>
</reference>
<reference key="2">
    <citation type="submission" date="2006-11" db="UniProtKB">
        <authorList>
            <person name="Lubec G."/>
            <person name="Afjehi-Sadat L."/>
        </authorList>
    </citation>
    <scope>PROTEIN SEQUENCE OF 295-306</scope>
    <scope>IDENTIFICATION BY MASS SPECTROMETRY</scope>
    <source>
        <strain>Sprague-Dawley</strain>
        <tissue>Spinal cord</tissue>
    </source>
</reference>
<reference key="3">
    <citation type="journal article" date="2012" name="Nat. Commun.">
        <title>Quantitative maps of protein phosphorylation sites across 14 different rat organs and tissues.</title>
        <authorList>
            <person name="Lundby A."/>
            <person name="Secher A."/>
            <person name="Lage K."/>
            <person name="Nordsborg N.B."/>
            <person name="Dmytriyev A."/>
            <person name="Lundby C."/>
            <person name="Olsen J.V."/>
        </authorList>
    </citation>
    <scope>PHOSPHORYLATION [LARGE SCALE ANALYSIS] AT SER-252</scope>
    <scope>IDENTIFICATION BY MASS SPECTROMETRY [LARGE SCALE ANALYSIS]</scope>
</reference>
<sequence>MMGHRPVLVLSQNTKRESGRKVQSGNINAAKTIADIIRTCLGPKSMMKMLLDPMGGIVMTNDGNAILREIQVQHPAAKSMIEISRTQDEEVGDGTTSVIILAGEMLSVAEHFLEQQMHPTVVISAYRMALDDMVSTLKKISTPVDVNNRDMMLNIINSSITTKVISRWSSLACNIALDAVKTVQFEENGRKEIDIKKYARVEKIPGGIIEDSCVLRGVMINKDVTHPRMRRYIKNPRIVLLDSSLEYKKGESQTDIEITREEDFTRILQMEEEYIQQLCEDIIQLKPDVVITEKGISDLAQHYLMRANVTAIRRVRKTDNNRIARACGARIVSRPEELREDDVGTGAGLLEIKKIGDEYFTFITDCKDPKACTILLRGASKEILSEVERNLQDAMQVCRNVLLDPQLVPGGGASEMAVAHALTEKSKAMTGVEQWPYRAVAQALEVIPRTLIQNCGASTIRLLTSLRAKHTQENCETWGVNGETGTLVDMKELGIWEPLAVKLQTYKTAVETAVLLLRIDDIVSGHKKKGDDQNRQTGAPDAGQE</sequence>
<name>TCPG_RAT</name>
<proteinExistence type="evidence at protein level"/>
<keyword id="KW-0007">Acetylation</keyword>
<keyword id="KW-0067">ATP-binding</keyword>
<keyword id="KW-0143">Chaperone</keyword>
<keyword id="KW-0963">Cytoplasm</keyword>
<keyword id="KW-0903">Direct protein sequencing</keyword>
<keyword id="KW-1015">Disulfide bond</keyword>
<keyword id="KW-0378">Hydrolase</keyword>
<keyword id="KW-1017">Isopeptide bond</keyword>
<keyword id="KW-0460">Magnesium</keyword>
<keyword id="KW-0479">Metal-binding</keyword>
<keyword id="KW-0547">Nucleotide-binding</keyword>
<keyword id="KW-0597">Phosphoprotein</keyword>
<keyword id="KW-1185">Reference proteome</keyword>
<keyword id="KW-0832">Ubl conjugation</keyword>
<comment type="function">
    <text evidence="2">Component of the chaperonin-containing T-complex (TRiC), a molecular chaperone complex that assists the folding of actin, tubulin and other proteins upon ATP hydrolysis. The TRiC complex mediates the folding of WRAP53/TCAB1, thereby regulating telomere maintenance. As part of the TRiC complex may play a role in the assembly of BBSome, a complex involved in ciliogenesis regulating transports vesicles to the cilia.</text>
</comment>
<comment type="catalytic activity">
    <reaction evidence="2">
        <text>ATP + H2O = ADP + phosphate + H(+)</text>
        <dbReference type="Rhea" id="RHEA:13065"/>
        <dbReference type="ChEBI" id="CHEBI:15377"/>
        <dbReference type="ChEBI" id="CHEBI:15378"/>
        <dbReference type="ChEBI" id="CHEBI:30616"/>
        <dbReference type="ChEBI" id="CHEBI:43474"/>
        <dbReference type="ChEBI" id="CHEBI:456216"/>
    </reaction>
</comment>
<comment type="subunit">
    <text evidence="2 3">Component of the chaperonin-containing T-complex (TRiC), a hexadecamer composed of two identical back-to-back stacked rings enclosing a protein folding chamber. Each ring is made up of eight different subunits: TCP1/CCT1, CCT2, CCT3, CCT4, CCT5, CCT6A/CCT6, CCT7, CCT8. Interacts with PACRG (By similarity). Interacts with DNAAF4 (By similarity). Interacts with DLEC1 (By similarity).</text>
</comment>
<comment type="subcellular location">
    <subcellularLocation>
        <location evidence="5">Cytoplasm</location>
    </subcellularLocation>
</comment>
<comment type="similarity">
    <text evidence="5">Belongs to the TCP-1 chaperonin family.</text>
</comment>
<organism>
    <name type="scientific">Rattus norvegicus</name>
    <name type="common">Rat</name>
    <dbReference type="NCBI Taxonomy" id="10116"/>
    <lineage>
        <taxon>Eukaryota</taxon>
        <taxon>Metazoa</taxon>
        <taxon>Chordata</taxon>
        <taxon>Craniata</taxon>
        <taxon>Vertebrata</taxon>
        <taxon>Euteleostomi</taxon>
        <taxon>Mammalia</taxon>
        <taxon>Eutheria</taxon>
        <taxon>Euarchontoglires</taxon>
        <taxon>Glires</taxon>
        <taxon>Rodentia</taxon>
        <taxon>Myomorpha</taxon>
        <taxon>Muroidea</taxon>
        <taxon>Muridae</taxon>
        <taxon>Murinae</taxon>
        <taxon>Rattus</taxon>
    </lineage>
</organism>
<accession>Q6P502</accession>
<feature type="chain" id="PRO_0000270762" description="T-complex protein 1 subunit gamma">
    <location>
        <begin position="1"/>
        <end position="545"/>
    </location>
</feature>
<feature type="region of interest" description="Disordered" evidence="4">
    <location>
        <begin position="1"/>
        <end position="24"/>
    </location>
</feature>
<feature type="region of interest" description="Disordered" evidence="4">
    <location>
        <begin position="526"/>
        <end position="545"/>
    </location>
</feature>
<feature type="binding site" evidence="2">
    <location>
        <position position="42"/>
    </location>
    <ligand>
        <name>ADP</name>
        <dbReference type="ChEBI" id="CHEBI:456216"/>
    </ligand>
</feature>
<feature type="binding site" evidence="2">
    <location>
        <position position="42"/>
    </location>
    <ligand>
        <name>ATP</name>
        <dbReference type="ChEBI" id="CHEBI:30616"/>
    </ligand>
</feature>
<feature type="binding site" evidence="2">
    <location>
        <position position="93"/>
    </location>
    <ligand>
        <name>Mg(2+)</name>
        <dbReference type="ChEBI" id="CHEBI:18420"/>
    </ligand>
</feature>
<feature type="binding site" evidence="2">
    <location>
        <position position="94"/>
    </location>
    <ligand>
        <name>ADP</name>
        <dbReference type="ChEBI" id="CHEBI:456216"/>
    </ligand>
</feature>
<feature type="binding site" evidence="2">
    <location>
        <position position="94"/>
    </location>
    <ligand>
        <name>ATP</name>
        <dbReference type="ChEBI" id="CHEBI:30616"/>
    </ligand>
</feature>
<feature type="binding site" evidence="2">
    <location>
        <position position="95"/>
    </location>
    <ligand>
        <name>ADP</name>
        <dbReference type="ChEBI" id="CHEBI:456216"/>
    </ligand>
</feature>
<feature type="binding site" evidence="2">
    <location>
        <position position="95"/>
    </location>
    <ligand>
        <name>ATP</name>
        <dbReference type="ChEBI" id="CHEBI:30616"/>
    </ligand>
</feature>
<feature type="binding site" evidence="2">
    <location>
        <position position="96"/>
    </location>
    <ligand>
        <name>ADP</name>
        <dbReference type="ChEBI" id="CHEBI:456216"/>
    </ligand>
</feature>
<feature type="binding site" evidence="2">
    <location>
        <position position="96"/>
    </location>
    <ligand>
        <name>ATP</name>
        <dbReference type="ChEBI" id="CHEBI:30616"/>
    </ligand>
</feature>
<feature type="binding site" evidence="2">
    <location>
        <position position="97"/>
    </location>
    <ligand>
        <name>ADP</name>
        <dbReference type="ChEBI" id="CHEBI:456216"/>
    </ligand>
</feature>
<feature type="binding site" evidence="2">
    <location>
        <position position="162"/>
    </location>
    <ligand>
        <name>ADP</name>
        <dbReference type="ChEBI" id="CHEBI:456216"/>
    </ligand>
</feature>
<feature type="binding site" evidence="2">
    <location>
        <position position="163"/>
    </location>
    <ligand>
        <name>ADP</name>
        <dbReference type="ChEBI" id="CHEBI:456216"/>
    </ligand>
</feature>
<feature type="binding site" evidence="2">
    <location>
        <position position="411"/>
    </location>
    <ligand>
        <name>ADP</name>
        <dbReference type="ChEBI" id="CHEBI:456216"/>
    </ligand>
</feature>
<feature type="binding site" evidence="2">
    <location>
        <position position="411"/>
    </location>
    <ligand>
        <name>ATP</name>
        <dbReference type="ChEBI" id="CHEBI:30616"/>
    </ligand>
</feature>
<feature type="binding site" evidence="2">
    <location>
        <position position="482"/>
    </location>
    <ligand>
        <name>ADP</name>
        <dbReference type="ChEBI" id="CHEBI:456216"/>
    </ligand>
</feature>
<feature type="binding site" evidence="2">
    <location>
        <position position="482"/>
    </location>
    <ligand>
        <name>ATP</name>
        <dbReference type="ChEBI" id="CHEBI:30616"/>
    </ligand>
</feature>
<feature type="binding site" evidence="2">
    <location>
        <position position="483"/>
    </location>
    <ligand>
        <name>ADP</name>
        <dbReference type="ChEBI" id="CHEBI:456216"/>
    </ligand>
</feature>
<feature type="binding site" evidence="2">
    <location>
        <position position="497"/>
    </location>
    <ligand>
        <name>ADP</name>
        <dbReference type="ChEBI" id="CHEBI:456216"/>
    </ligand>
</feature>
<feature type="binding site" evidence="2">
    <location>
        <position position="497"/>
    </location>
    <ligand>
        <name>ATP</name>
        <dbReference type="ChEBI" id="CHEBI:30616"/>
    </ligand>
</feature>
<feature type="binding site" evidence="2">
    <location>
        <position position="502"/>
    </location>
    <ligand>
        <name>ADP</name>
        <dbReference type="ChEBI" id="CHEBI:456216"/>
    </ligand>
</feature>
<feature type="modified residue" description="N-acetylmethionine" evidence="2">
    <location>
        <position position="1"/>
    </location>
</feature>
<feature type="modified residue" description="Phosphoserine" evidence="2">
    <location>
        <position position="11"/>
    </location>
</feature>
<feature type="modified residue" description="Phosphoserine" evidence="3">
    <location>
        <position position="170"/>
    </location>
</feature>
<feature type="modified residue" description="N6-acetyllysine" evidence="2">
    <location>
        <position position="222"/>
    </location>
</feature>
<feature type="modified residue" description="Phosphoserine" evidence="2">
    <location>
        <position position="243"/>
    </location>
</feature>
<feature type="modified residue" description="Phosphoserine" evidence="2">
    <location>
        <position position="244"/>
    </location>
</feature>
<feature type="modified residue" description="Phosphotyrosine" evidence="2">
    <location>
        <position position="247"/>
    </location>
</feature>
<feature type="modified residue" description="Phosphoserine" evidence="6">
    <location>
        <position position="252"/>
    </location>
</feature>
<feature type="modified residue" description="Phosphothreonine" evidence="2">
    <location>
        <position position="430"/>
    </location>
</feature>
<feature type="modified residue" description="Phosphothreonine" evidence="2">
    <location>
        <position position="459"/>
    </location>
</feature>
<feature type="disulfide bond" evidence="1">
    <location>
        <begin position="366"/>
        <end position="372"/>
    </location>
</feature>
<feature type="cross-link" description="Glycyl lysine isopeptide (Lys-Gly) (interchain with G-Cter in SUMO2)" evidence="2">
    <location>
        <position position="15"/>
    </location>
</feature>
<feature type="cross-link" description="Glycyl lysine isopeptide (Lys-Gly) (interchain with G-Cter in SUMO2)" evidence="2">
    <location>
        <position position="248"/>
    </location>
</feature>
<feature type="cross-link" description="Glycyl lysine isopeptide (Lys-Gly) (interchain with G-Cter in SUMO2)" evidence="2">
    <location>
        <position position="249"/>
    </location>
</feature>
<feature type="cross-link" description="Glycyl lysine isopeptide (Lys-Gly) (interchain with G-Cter in SUMO2)" evidence="2">
    <location>
        <position position="381"/>
    </location>
</feature>
<protein>
    <recommendedName>
        <fullName>T-complex protein 1 subunit gamma</fullName>
        <shortName>TCP-1-gamma</shortName>
        <ecNumber evidence="2">3.6.1.-</ecNumber>
    </recommendedName>
    <alternativeName>
        <fullName>CCT-gamma</fullName>
    </alternativeName>
</protein>